<organism>
    <name type="scientific">Ectopseudomonas mendocina (strain ymp)</name>
    <name type="common">Pseudomonas mendocina</name>
    <dbReference type="NCBI Taxonomy" id="399739"/>
    <lineage>
        <taxon>Bacteria</taxon>
        <taxon>Pseudomonadati</taxon>
        <taxon>Pseudomonadota</taxon>
        <taxon>Gammaproteobacteria</taxon>
        <taxon>Pseudomonadales</taxon>
        <taxon>Pseudomonadaceae</taxon>
        <taxon>Ectopseudomonas</taxon>
    </lineage>
</organism>
<evidence type="ECO:0000255" key="1">
    <source>
        <dbReference type="HAMAP-Rule" id="MF_00159"/>
    </source>
</evidence>
<gene>
    <name evidence="1" type="primary">ispG</name>
    <name type="ordered locus">Pmen_3500</name>
</gene>
<feature type="chain" id="PRO_1000011501" description="4-hydroxy-3-methylbut-2-en-1-yl diphosphate synthase (flavodoxin)">
    <location>
        <begin position="1"/>
        <end position="370"/>
    </location>
</feature>
<feature type="binding site" evidence="1">
    <location>
        <position position="270"/>
    </location>
    <ligand>
        <name>[4Fe-4S] cluster</name>
        <dbReference type="ChEBI" id="CHEBI:49883"/>
    </ligand>
</feature>
<feature type="binding site" evidence="1">
    <location>
        <position position="273"/>
    </location>
    <ligand>
        <name>[4Fe-4S] cluster</name>
        <dbReference type="ChEBI" id="CHEBI:49883"/>
    </ligand>
</feature>
<feature type="binding site" evidence="1">
    <location>
        <position position="305"/>
    </location>
    <ligand>
        <name>[4Fe-4S] cluster</name>
        <dbReference type="ChEBI" id="CHEBI:49883"/>
    </ligand>
</feature>
<feature type="binding site" evidence="1">
    <location>
        <position position="312"/>
    </location>
    <ligand>
        <name>[4Fe-4S] cluster</name>
        <dbReference type="ChEBI" id="CHEBI:49883"/>
    </ligand>
</feature>
<protein>
    <recommendedName>
        <fullName evidence="1">4-hydroxy-3-methylbut-2-en-1-yl diphosphate synthase (flavodoxin)</fullName>
        <ecNumber evidence="1">1.17.7.3</ecNumber>
    </recommendedName>
    <alternativeName>
        <fullName evidence="1">1-hydroxy-2-methyl-2-(E)-butenyl 4-diphosphate synthase</fullName>
    </alternativeName>
</protein>
<keyword id="KW-0004">4Fe-4S</keyword>
<keyword id="KW-0408">Iron</keyword>
<keyword id="KW-0411">Iron-sulfur</keyword>
<keyword id="KW-0414">Isoprene biosynthesis</keyword>
<keyword id="KW-0479">Metal-binding</keyword>
<keyword id="KW-0560">Oxidoreductase</keyword>
<accession>A4XY32</accession>
<reference key="1">
    <citation type="submission" date="2007-04" db="EMBL/GenBank/DDBJ databases">
        <title>Complete sequence of Pseudomonas mendocina ymp.</title>
        <authorList>
            <consortium name="US DOE Joint Genome Institute"/>
            <person name="Copeland A."/>
            <person name="Lucas S."/>
            <person name="Lapidus A."/>
            <person name="Barry K."/>
            <person name="Glavina del Rio T."/>
            <person name="Dalin E."/>
            <person name="Tice H."/>
            <person name="Pitluck S."/>
            <person name="Kiss H."/>
            <person name="Brettin T."/>
            <person name="Detter J.C."/>
            <person name="Bruce D."/>
            <person name="Han C."/>
            <person name="Schmutz J."/>
            <person name="Larimer F."/>
            <person name="Land M."/>
            <person name="Hauser L."/>
            <person name="Kyrpides N."/>
            <person name="Mikhailova N."/>
            <person name="Hersman L."/>
            <person name="Dubois J."/>
            <person name="Maurice P."/>
            <person name="Richardson P."/>
        </authorList>
    </citation>
    <scope>NUCLEOTIDE SEQUENCE [LARGE SCALE GENOMIC DNA]</scope>
    <source>
        <strain>ymp</strain>
    </source>
</reference>
<name>ISPG_ECTM1</name>
<dbReference type="EC" id="1.17.7.3" evidence="1"/>
<dbReference type="EMBL" id="CP000680">
    <property type="protein sequence ID" value="ABP86248.1"/>
    <property type="molecule type" value="Genomic_DNA"/>
</dbReference>
<dbReference type="SMR" id="A4XY32"/>
<dbReference type="STRING" id="399739.Pmen_3500"/>
<dbReference type="KEGG" id="pmy:Pmen_3500"/>
<dbReference type="PATRIC" id="fig|399739.8.peg.3546"/>
<dbReference type="eggNOG" id="COG0821">
    <property type="taxonomic scope" value="Bacteria"/>
</dbReference>
<dbReference type="HOGENOM" id="CLU_042258_0_0_6"/>
<dbReference type="OrthoDB" id="9803214at2"/>
<dbReference type="UniPathway" id="UPA00056">
    <property type="reaction ID" value="UER00096"/>
</dbReference>
<dbReference type="GO" id="GO:0051539">
    <property type="term" value="F:4 iron, 4 sulfur cluster binding"/>
    <property type="evidence" value="ECO:0007669"/>
    <property type="project" value="UniProtKB-UniRule"/>
</dbReference>
<dbReference type="GO" id="GO:0046429">
    <property type="term" value="F:4-hydroxy-3-methylbut-2-en-1-yl diphosphate synthase activity (ferredoxin)"/>
    <property type="evidence" value="ECO:0007669"/>
    <property type="project" value="UniProtKB-UniRule"/>
</dbReference>
<dbReference type="GO" id="GO:0141197">
    <property type="term" value="F:4-hydroxy-3-methylbut-2-enyl-diphosphate synthase activity (flavodoxin)"/>
    <property type="evidence" value="ECO:0007669"/>
    <property type="project" value="UniProtKB-EC"/>
</dbReference>
<dbReference type="GO" id="GO:0005506">
    <property type="term" value="F:iron ion binding"/>
    <property type="evidence" value="ECO:0007669"/>
    <property type="project" value="InterPro"/>
</dbReference>
<dbReference type="GO" id="GO:0019288">
    <property type="term" value="P:isopentenyl diphosphate biosynthetic process, methylerythritol 4-phosphate pathway"/>
    <property type="evidence" value="ECO:0007669"/>
    <property type="project" value="UniProtKB-UniRule"/>
</dbReference>
<dbReference type="GO" id="GO:0016114">
    <property type="term" value="P:terpenoid biosynthetic process"/>
    <property type="evidence" value="ECO:0007669"/>
    <property type="project" value="InterPro"/>
</dbReference>
<dbReference type="FunFam" id="3.20.20.20:FF:000001">
    <property type="entry name" value="4-hydroxy-3-methylbut-2-en-1-yl diphosphate synthase (flavodoxin)"/>
    <property type="match status" value="1"/>
</dbReference>
<dbReference type="Gene3D" id="3.20.20.20">
    <property type="entry name" value="Dihydropteroate synthase-like"/>
    <property type="match status" value="1"/>
</dbReference>
<dbReference type="Gene3D" id="3.30.413.10">
    <property type="entry name" value="Sulfite Reductase Hemoprotein, domain 1"/>
    <property type="match status" value="1"/>
</dbReference>
<dbReference type="HAMAP" id="MF_00159">
    <property type="entry name" value="IspG"/>
    <property type="match status" value="1"/>
</dbReference>
<dbReference type="InterPro" id="IPR011005">
    <property type="entry name" value="Dihydropteroate_synth-like_sf"/>
</dbReference>
<dbReference type="InterPro" id="IPR016425">
    <property type="entry name" value="IspG_bac"/>
</dbReference>
<dbReference type="InterPro" id="IPR004588">
    <property type="entry name" value="IspG_bac-typ"/>
</dbReference>
<dbReference type="InterPro" id="IPR045854">
    <property type="entry name" value="NO2/SO3_Rdtase_4Fe4S_sf"/>
</dbReference>
<dbReference type="NCBIfam" id="TIGR00612">
    <property type="entry name" value="ispG_gcpE"/>
    <property type="match status" value="1"/>
</dbReference>
<dbReference type="NCBIfam" id="NF001540">
    <property type="entry name" value="PRK00366.1"/>
    <property type="match status" value="1"/>
</dbReference>
<dbReference type="PANTHER" id="PTHR30454">
    <property type="entry name" value="4-HYDROXY-3-METHYLBUT-2-EN-1-YL DIPHOSPHATE SYNTHASE"/>
    <property type="match status" value="1"/>
</dbReference>
<dbReference type="PANTHER" id="PTHR30454:SF0">
    <property type="entry name" value="4-HYDROXY-3-METHYLBUT-2-EN-1-YL DIPHOSPHATE SYNTHASE (FERREDOXIN), CHLOROPLASTIC"/>
    <property type="match status" value="1"/>
</dbReference>
<dbReference type="Pfam" id="PF04551">
    <property type="entry name" value="GcpE"/>
    <property type="match status" value="1"/>
</dbReference>
<dbReference type="PIRSF" id="PIRSF004640">
    <property type="entry name" value="IspG"/>
    <property type="match status" value="1"/>
</dbReference>
<dbReference type="SUPFAM" id="SSF51395">
    <property type="entry name" value="FMN-linked oxidoreductases"/>
    <property type="match status" value="1"/>
</dbReference>
<dbReference type="SUPFAM" id="SSF56014">
    <property type="entry name" value="Nitrite and sulphite reductase 4Fe-4S domain-like"/>
    <property type="match status" value="1"/>
</dbReference>
<sequence length="370" mass="39825">MHCESPIKRRLSRKIWVGSVPVGGDAPIAVQSMTNTDTNDVAATVAQIRRLEDAGADIVRVSVPDMDAAEAFGRIKQQVRVPLVADIHFDYQIALRVAELGVDCLRINPGNIGREDRVKAVVEAARDKGIPIRIGVNAGSLEKDLQKKYGEPTPAALVESALRHVEHLDRLNFPDFKVSVKASDVFMAVEAYRLLAKQIEQPLHLGITEAGGLRSGTVKSAVGLGMLLAEGIGDTIRISLAADPVEEIKVGFDILKSLRLRSRGINFIACPSCSRQNFDVVKTMNELESRVEDLLVPLDVAVIGCVVNGPGEAKEAHIGLTGGSPNNLVYIDGKPASKLTNENLVDELEKLIRDKAAEKAAADAAVIVRS</sequence>
<proteinExistence type="inferred from homology"/>
<comment type="function">
    <text evidence="1">Converts 2C-methyl-D-erythritol 2,4-cyclodiphosphate (ME-2,4cPP) into 1-hydroxy-2-methyl-2-(E)-butenyl 4-diphosphate.</text>
</comment>
<comment type="catalytic activity">
    <reaction evidence="1">
        <text>(2E)-4-hydroxy-3-methylbut-2-enyl diphosphate + oxidized [flavodoxin] + H2O + 2 H(+) = 2-C-methyl-D-erythritol 2,4-cyclic diphosphate + reduced [flavodoxin]</text>
        <dbReference type="Rhea" id="RHEA:43604"/>
        <dbReference type="Rhea" id="RHEA-COMP:10622"/>
        <dbReference type="Rhea" id="RHEA-COMP:10623"/>
        <dbReference type="ChEBI" id="CHEBI:15377"/>
        <dbReference type="ChEBI" id="CHEBI:15378"/>
        <dbReference type="ChEBI" id="CHEBI:57618"/>
        <dbReference type="ChEBI" id="CHEBI:58210"/>
        <dbReference type="ChEBI" id="CHEBI:58483"/>
        <dbReference type="ChEBI" id="CHEBI:128753"/>
        <dbReference type="EC" id="1.17.7.3"/>
    </reaction>
</comment>
<comment type="cofactor">
    <cofactor evidence="1">
        <name>[4Fe-4S] cluster</name>
        <dbReference type="ChEBI" id="CHEBI:49883"/>
    </cofactor>
    <text evidence="1">Binds 1 [4Fe-4S] cluster.</text>
</comment>
<comment type="pathway">
    <text evidence="1">Isoprenoid biosynthesis; isopentenyl diphosphate biosynthesis via DXP pathway; isopentenyl diphosphate from 1-deoxy-D-xylulose 5-phosphate: step 5/6.</text>
</comment>
<comment type="similarity">
    <text evidence="1">Belongs to the IspG family.</text>
</comment>